<keyword id="KW-0963">Cytoplasm</keyword>
<keyword id="KW-0251">Elongation factor</keyword>
<keyword id="KW-0648">Protein biosynthesis</keyword>
<sequence length="292" mass="31133">MEITASLVKELRERTGAGMMECKKALVENAGDIDAAAEWLRKSGLAKADKKADRVAAEGRIATAQAGGKAVLVEVNSETDFVAKDENFLAFTEVVANAALNSDAADAEALKSVKLDSGETIEERRAAVIAKVGENLQVRRLVRIDSANNVAAYVHGGRIGVLVELKGGDIELARGIAMHIAAMNPPHVKASDVPAEFVAKEKEIELAKMSEKDKAKPADILEKIISGKISKIVNEVTLYGQPYVLNTDQTVEQAVKAAGAEVIRFQRLAVGEGIEKVVEDYAAEVMKQAGLA</sequence>
<organism>
    <name type="scientific">Xanthomonas oryzae pv. oryzae (strain PXO99A)</name>
    <dbReference type="NCBI Taxonomy" id="360094"/>
    <lineage>
        <taxon>Bacteria</taxon>
        <taxon>Pseudomonadati</taxon>
        <taxon>Pseudomonadota</taxon>
        <taxon>Gammaproteobacteria</taxon>
        <taxon>Lysobacterales</taxon>
        <taxon>Lysobacteraceae</taxon>
        <taxon>Xanthomonas</taxon>
    </lineage>
</organism>
<protein>
    <recommendedName>
        <fullName evidence="1">Elongation factor Ts</fullName>
        <shortName evidence="1">EF-Ts</shortName>
    </recommendedName>
</protein>
<dbReference type="EMBL" id="CP000967">
    <property type="protein sequence ID" value="ACD59560.1"/>
    <property type="molecule type" value="Genomic_DNA"/>
</dbReference>
<dbReference type="RefSeq" id="WP_011258700.1">
    <property type="nucleotide sequence ID" value="NC_010717.2"/>
</dbReference>
<dbReference type="SMR" id="B2SQZ9"/>
<dbReference type="KEGG" id="xop:PXO_01131"/>
<dbReference type="eggNOG" id="COG0264">
    <property type="taxonomic scope" value="Bacteria"/>
</dbReference>
<dbReference type="HOGENOM" id="CLU_047155_0_0_6"/>
<dbReference type="Proteomes" id="UP000001740">
    <property type="component" value="Chromosome"/>
</dbReference>
<dbReference type="GO" id="GO:0005737">
    <property type="term" value="C:cytoplasm"/>
    <property type="evidence" value="ECO:0007669"/>
    <property type="project" value="UniProtKB-SubCell"/>
</dbReference>
<dbReference type="GO" id="GO:0003746">
    <property type="term" value="F:translation elongation factor activity"/>
    <property type="evidence" value="ECO:0007669"/>
    <property type="project" value="UniProtKB-UniRule"/>
</dbReference>
<dbReference type="CDD" id="cd14275">
    <property type="entry name" value="UBA_EF-Ts"/>
    <property type="match status" value="1"/>
</dbReference>
<dbReference type="FunFam" id="1.10.286.20:FF:000001">
    <property type="entry name" value="Elongation factor Ts"/>
    <property type="match status" value="1"/>
</dbReference>
<dbReference type="FunFam" id="1.10.8.10:FF:000001">
    <property type="entry name" value="Elongation factor Ts"/>
    <property type="match status" value="1"/>
</dbReference>
<dbReference type="FunFam" id="3.30.479.20:FF:000001">
    <property type="entry name" value="Elongation factor Ts"/>
    <property type="match status" value="1"/>
</dbReference>
<dbReference type="Gene3D" id="1.10.286.20">
    <property type="match status" value="1"/>
</dbReference>
<dbReference type="Gene3D" id="1.10.8.10">
    <property type="entry name" value="DNA helicase RuvA subunit, C-terminal domain"/>
    <property type="match status" value="1"/>
</dbReference>
<dbReference type="Gene3D" id="3.30.479.20">
    <property type="entry name" value="Elongation factor Ts, dimerisation domain"/>
    <property type="match status" value="2"/>
</dbReference>
<dbReference type="HAMAP" id="MF_00050">
    <property type="entry name" value="EF_Ts"/>
    <property type="match status" value="1"/>
</dbReference>
<dbReference type="InterPro" id="IPR036402">
    <property type="entry name" value="EF-Ts_dimer_sf"/>
</dbReference>
<dbReference type="InterPro" id="IPR001816">
    <property type="entry name" value="Transl_elong_EFTs/EF1B"/>
</dbReference>
<dbReference type="InterPro" id="IPR014039">
    <property type="entry name" value="Transl_elong_EFTs/EF1B_dimer"/>
</dbReference>
<dbReference type="InterPro" id="IPR018101">
    <property type="entry name" value="Transl_elong_Ts_CS"/>
</dbReference>
<dbReference type="InterPro" id="IPR009060">
    <property type="entry name" value="UBA-like_sf"/>
</dbReference>
<dbReference type="NCBIfam" id="TIGR00116">
    <property type="entry name" value="tsf"/>
    <property type="match status" value="1"/>
</dbReference>
<dbReference type="PANTHER" id="PTHR11741">
    <property type="entry name" value="ELONGATION FACTOR TS"/>
    <property type="match status" value="1"/>
</dbReference>
<dbReference type="PANTHER" id="PTHR11741:SF0">
    <property type="entry name" value="ELONGATION FACTOR TS, MITOCHONDRIAL"/>
    <property type="match status" value="1"/>
</dbReference>
<dbReference type="Pfam" id="PF00889">
    <property type="entry name" value="EF_TS"/>
    <property type="match status" value="1"/>
</dbReference>
<dbReference type="SUPFAM" id="SSF54713">
    <property type="entry name" value="Elongation factor Ts (EF-Ts), dimerisation domain"/>
    <property type="match status" value="2"/>
</dbReference>
<dbReference type="SUPFAM" id="SSF46934">
    <property type="entry name" value="UBA-like"/>
    <property type="match status" value="1"/>
</dbReference>
<dbReference type="PROSITE" id="PS01126">
    <property type="entry name" value="EF_TS_1"/>
    <property type="match status" value="1"/>
</dbReference>
<dbReference type="PROSITE" id="PS01127">
    <property type="entry name" value="EF_TS_2"/>
    <property type="match status" value="1"/>
</dbReference>
<feature type="chain" id="PRO_1000189906" description="Elongation factor Ts">
    <location>
        <begin position="1"/>
        <end position="292"/>
    </location>
</feature>
<feature type="region of interest" description="Involved in Mg(2+) ion dislocation from EF-Tu" evidence="1">
    <location>
        <begin position="79"/>
        <end position="82"/>
    </location>
</feature>
<proteinExistence type="inferred from homology"/>
<accession>B2SQZ9</accession>
<reference key="1">
    <citation type="journal article" date="2008" name="BMC Genomics">
        <title>Genome sequence and rapid evolution of the rice pathogen Xanthomonas oryzae pv. oryzae PXO99A.</title>
        <authorList>
            <person name="Salzberg S.L."/>
            <person name="Sommer D.D."/>
            <person name="Schatz M.C."/>
            <person name="Phillippy A.M."/>
            <person name="Rabinowicz P.D."/>
            <person name="Tsuge S."/>
            <person name="Furutani A."/>
            <person name="Ochiai H."/>
            <person name="Delcher A.L."/>
            <person name="Kelley D."/>
            <person name="Madupu R."/>
            <person name="Puiu D."/>
            <person name="Radune D."/>
            <person name="Shumway M."/>
            <person name="Trapnell C."/>
            <person name="Aparna G."/>
            <person name="Jha G."/>
            <person name="Pandey A."/>
            <person name="Patil P.B."/>
            <person name="Ishihara H."/>
            <person name="Meyer D.F."/>
            <person name="Szurek B."/>
            <person name="Verdier V."/>
            <person name="Koebnik R."/>
            <person name="Dow J.M."/>
            <person name="Ryan R.P."/>
            <person name="Hirata H."/>
            <person name="Tsuyumu S."/>
            <person name="Won Lee S."/>
            <person name="Seo Y.-S."/>
            <person name="Sriariyanum M."/>
            <person name="Ronald P.C."/>
            <person name="Sonti R.V."/>
            <person name="Van Sluys M.-A."/>
            <person name="Leach J.E."/>
            <person name="White F.F."/>
            <person name="Bogdanove A.J."/>
        </authorList>
    </citation>
    <scope>NUCLEOTIDE SEQUENCE [LARGE SCALE GENOMIC DNA]</scope>
    <source>
        <strain>PXO99A</strain>
    </source>
</reference>
<comment type="function">
    <text evidence="1">Associates with the EF-Tu.GDP complex and induces the exchange of GDP to GTP. It remains bound to the aminoacyl-tRNA.EF-Tu.GTP complex up to the GTP hydrolysis stage on the ribosome.</text>
</comment>
<comment type="subcellular location">
    <subcellularLocation>
        <location evidence="1">Cytoplasm</location>
    </subcellularLocation>
</comment>
<comment type="similarity">
    <text evidence="1">Belongs to the EF-Ts family.</text>
</comment>
<gene>
    <name evidence="1" type="primary">tsf</name>
    <name type="ordered locus">PXO_01131</name>
</gene>
<evidence type="ECO:0000255" key="1">
    <source>
        <dbReference type="HAMAP-Rule" id="MF_00050"/>
    </source>
</evidence>
<name>EFTS_XANOP</name>